<name>RBSD_COPPD</name>
<proteinExistence type="inferred from homology"/>
<dbReference type="EC" id="5.4.99.62" evidence="1"/>
<dbReference type="EMBL" id="CP001145">
    <property type="protein sequence ID" value="ACI17938.1"/>
    <property type="molecule type" value="Genomic_DNA"/>
</dbReference>
<dbReference type="RefSeq" id="WP_012544589.1">
    <property type="nucleotide sequence ID" value="NC_011295.1"/>
</dbReference>
<dbReference type="SMR" id="B5Y646"/>
<dbReference type="STRING" id="309798.COPRO5265_1468"/>
<dbReference type="KEGG" id="cpo:COPRO5265_1468"/>
<dbReference type="eggNOG" id="COG1869">
    <property type="taxonomic scope" value="Bacteria"/>
</dbReference>
<dbReference type="HOGENOM" id="CLU_135498_0_0_9"/>
<dbReference type="OrthoDB" id="9805009at2"/>
<dbReference type="UniPathway" id="UPA00916">
    <property type="reaction ID" value="UER00888"/>
</dbReference>
<dbReference type="Proteomes" id="UP000001732">
    <property type="component" value="Chromosome"/>
</dbReference>
<dbReference type="GO" id="GO:0005829">
    <property type="term" value="C:cytosol"/>
    <property type="evidence" value="ECO:0007669"/>
    <property type="project" value="TreeGrafter"/>
</dbReference>
<dbReference type="GO" id="GO:0062193">
    <property type="term" value="F:D-ribose pyranase activity"/>
    <property type="evidence" value="ECO:0007669"/>
    <property type="project" value="UniProtKB-EC"/>
</dbReference>
<dbReference type="GO" id="GO:0016872">
    <property type="term" value="F:intramolecular lyase activity"/>
    <property type="evidence" value="ECO:0007669"/>
    <property type="project" value="UniProtKB-UniRule"/>
</dbReference>
<dbReference type="GO" id="GO:0048029">
    <property type="term" value="F:monosaccharide binding"/>
    <property type="evidence" value="ECO:0007669"/>
    <property type="project" value="InterPro"/>
</dbReference>
<dbReference type="GO" id="GO:0019303">
    <property type="term" value="P:D-ribose catabolic process"/>
    <property type="evidence" value="ECO:0007669"/>
    <property type="project" value="UniProtKB-UniRule"/>
</dbReference>
<dbReference type="Gene3D" id="3.40.1650.10">
    <property type="entry name" value="RbsD-like domain"/>
    <property type="match status" value="1"/>
</dbReference>
<dbReference type="HAMAP" id="MF_01661">
    <property type="entry name" value="D_rib_pyranase"/>
    <property type="match status" value="1"/>
</dbReference>
<dbReference type="InterPro" id="IPR023064">
    <property type="entry name" value="D-ribose_pyranase"/>
</dbReference>
<dbReference type="InterPro" id="IPR023750">
    <property type="entry name" value="RbsD-like_sf"/>
</dbReference>
<dbReference type="InterPro" id="IPR007721">
    <property type="entry name" value="RbsD_FucU"/>
</dbReference>
<dbReference type="NCBIfam" id="NF008761">
    <property type="entry name" value="PRK11797.1"/>
    <property type="match status" value="1"/>
</dbReference>
<dbReference type="PANTHER" id="PTHR37831">
    <property type="entry name" value="D-RIBOSE PYRANASE"/>
    <property type="match status" value="1"/>
</dbReference>
<dbReference type="PANTHER" id="PTHR37831:SF1">
    <property type="entry name" value="D-RIBOSE PYRANASE"/>
    <property type="match status" value="1"/>
</dbReference>
<dbReference type="Pfam" id="PF05025">
    <property type="entry name" value="RbsD_FucU"/>
    <property type="match status" value="1"/>
</dbReference>
<dbReference type="SUPFAM" id="SSF102546">
    <property type="entry name" value="RbsD-like"/>
    <property type="match status" value="1"/>
</dbReference>
<gene>
    <name evidence="1" type="primary">rbsD</name>
    <name type="ordered locus">COPRO5265_1468</name>
</gene>
<evidence type="ECO:0000255" key="1">
    <source>
        <dbReference type="HAMAP-Rule" id="MF_01661"/>
    </source>
</evidence>
<reference key="1">
    <citation type="submission" date="2008-08" db="EMBL/GenBank/DDBJ databases">
        <title>The complete genome sequence of Coprothermobacter proteolyticus strain ATCC 5245 / DSM 5265 / BT.</title>
        <authorList>
            <person name="Dodson R.J."/>
            <person name="Durkin A.S."/>
            <person name="Wu M."/>
            <person name="Eisen J."/>
            <person name="Sutton G."/>
        </authorList>
    </citation>
    <scope>NUCLEOTIDE SEQUENCE [LARGE SCALE GENOMIC DNA]</scope>
    <source>
        <strain>ATCC 35245 / DSM 5265 / OCM 4 / BT</strain>
    </source>
</reference>
<sequence length="131" mass="14569">MKKTILINSRLSEVIASMGHTDTIAIADSGLPIPKGVERIDLALTRDIPRFLDTLRVILSELCVEEAIIATEMKEKSPETYAELLKILGNIPIKEVSHEELKVMTKECVAVVRTGEYTPYCNIILRSGVVF</sequence>
<organism>
    <name type="scientific">Coprothermobacter proteolyticus (strain ATCC 35245 / DSM 5265 / OCM 4 / BT)</name>
    <dbReference type="NCBI Taxonomy" id="309798"/>
    <lineage>
        <taxon>Bacteria</taxon>
        <taxon>Pseudomonadati</taxon>
        <taxon>Coprothermobacterota</taxon>
        <taxon>Coprothermobacteria</taxon>
        <taxon>Coprothermobacterales</taxon>
        <taxon>Coprothermobacteraceae</taxon>
        <taxon>Coprothermobacter</taxon>
    </lineage>
</organism>
<keyword id="KW-0119">Carbohydrate metabolism</keyword>
<keyword id="KW-0963">Cytoplasm</keyword>
<keyword id="KW-0413">Isomerase</keyword>
<keyword id="KW-1185">Reference proteome</keyword>
<protein>
    <recommendedName>
        <fullName evidence="1">D-ribose pyranase</fullName>
        <ecNumber evidence="1">5.4.99.62</ecNumber>
    </recommendedName>
</protein>
<comment type="function">
    <text evidence="1">Catalyzes the interconversion of beta-pyran and beta-furan forms of D-ribose.</text>
</comment>
<comment type="catalytic activity">
    <reaction evidence="1">
        <text>beta-D-ribopyranose = beta-D-ribofuranose</text>
        <dbReference type="Rhea" id="RHEA:25432"/>
        <dbReference type="ChEBI" id="CHEBI:27476"/>
        <dbReference type="ChEBI" id="CHEBI:47002"/>
        <dbReference type="EC" id="5.4.99.62"/>
    </reaction>
</comment>
<comment type="pathway">
    <text evidence="1">Carbohydrate metabolism; D-ribose degradation; D-ribose 5-phosphate from beta-D-ribopyranose: step 1/2.</text>
</comment>
<comment type="subunit">
    <text evidence="1">Homodecamer.</text>
</comment>
<comment type="subcellular location">
    <subcellularLocation>
        <location evidence="1">Cytoplasm</location>
    </subcellularLocation>
</comment>
<comment type="similarity">
    <text evidence="1">Belongs to the RbsD / FucU family. RbsD subfamily.</text>
</comment>
<feature type="chain" id="PRO_1000187139" description="D-ribose pyranase">
    <location>
        <begin position="1"/>
        <end position="131"/>
    </location>
</feature>
<feature type="active site" description="Proton donor" evidence="1">
    <location>
        <position position="20"/>
    </location>
</feature>
<feature type="binding site" evidence="1">
    <location>
        <position position="28"/>
    </location>
    <ligand>
        <name>substrate</name>
    </ligand>
</feature>
<feature type="binding site" evidence="1">
    <location>
        <position position="98"/>
    </location>
    <ligand>
        <name>substrate</name>
    </ligand>
</feature>
<feature type="binding site" evidence="1">
    <location>
        <begin position="120"/>
        <end position="122"/>
    </location>
    <ligand>
        <name>substrate</name>
    </ligand>
</feature>
<accession>B5Y646</accession>